<keyword id="KW-0520">NAD</keyword>
<keyword id="KW-0560">Oxidoreductase</keyword>
<feature type="initiator methionine" description="Removed" evidence="6">
    <location>
        <position position="1"/>
    </location>
</feature>
<feature type="chain" id="PRO_0000182807" description="Phenylalanine dehydrogenase">
    <location>
        <begin position="2"/>
        <end position="381"/>
    </location>
</feature>
<feature type="active site" evidence="1 2">
    <location>
        <position position="91"/>
    </location>
</feature>
<feature type="binding site" evidence="1">
    <location>
        <position position="55"/>
    </location>
    <ligand>
        <name>NAD(+)</name>
        <dbReference type="ChEBI" id="CHEBI:57540"/>
    </ligand>
</feature>
<feature type="binding site" evidence="1">
    <location>
        <position position="79"/>
    </location>
    <ligand>
        <name>L-phenylalanine</name>
        <dbReference type="ChEBI" id="CHEBI:58095"/>
    </ligand>
</feature>
<feature type="binding site" evidence="1">
    <location>
        <position position="126"/>
    </location>
    <ligand>
        <name>NAD(+)</name>
        <dbReference type="ChEBI" id="CHEBI:57540"/>
    </ligand>
</feature>
<feature type="binding site" evidence="1">
    <location>
        <position position="157"/>
    </location>
    <ligand>
        <name>NAD(+)</name>
        <dbReference type="ChEBI" id="CHEBI:57540"/>
    </ligand>
</feature>
<feature type="binding site" evidence="1">
    <location>
        <position position="161"/>
    </location>
    <ligand>
        <name>NAD(+)</name>
        <dbReference type="ChEBI" id="CHEBI:57540"/>
    </ligand>
</feature>
<feature type="binding site" evidence="1">
    <location>
        <begin position="191"/>
        <end position="197"/>
    </location>
    <ligand>
        <name>NAD(+)</name>
        <dbReference type="ChEBI" id="CHEBI:57540"/>
    </ligand>
</feature>
<feature type="binding site" evidence="1">
    <location>
        <begin position="214"/>
        <end position="215"/>
    </location>
    <ligand>
        <name>NAD(+)</name>
        <dbReference type="ChEBI" id="CHEBI:57540"/>
    </ligand>
</feature>
<feature type="binding site" evidence="1">
    <location>
        <begin position="254"/>
        <end position="255"/>
    </location>
    <ligand>
        <name>NAD(+)</name>
        <dbReference type="ChEBI" id="CHEBI:57540"/>
    </ligand>
</feature>
<feature type="binding site" evidence="1">
    <location>
        <begin position="275"/>
        <end position="277"/>
    </location>
    <ligand>
        <name>NAD(+)</name>
        <dbReference type="ChEBI" id="CHEBI:57540"/>
    </ligand>
</feature>
<feature type="binding site" evidence="1">
    <location>
        <position position="277"/>
    </location>
    <ligand>
        <name>L-phenylalanine</name>
        <dbReference type="ChEBI" id="CHEBI:58095"/>
    </ligand>
</feature>
<name>DHPH_LYSSH</name>
<organism>
    <name type="scientific">Lysinibacillus sphaericus</name>
    <name type="common">Bacillus sphaericus</name>
    <dbReference type="NCBI Taxonomy" id="1421"/>
    <lineage>
        <taxon>Bacteria</taxon>
        <taxon>Bacillati</taxon>
        <taxon>Bacillota</taxon>
        <taxon>Bacilli</taxon>
        <taxon>Bacillales</taxon>
        <taxon>Bacillaceae</taxon>
        <taxon>Lysinibacillus</taxon>
    </lineage>
</organism>
<evidence type="ECO:0000250" key="1">
    <source>
        <dbReference type="UniProtKB" id="Q59771"/>
    </source>
</evidence>
<evidence type="ECO:0000255" key="2">
    <source>
        <dbReference type="PROSITE-ProRule" id="PRU10011"/>
    </source>
</evidence>
<evidence type="ECO:0000269" key="3">
    <source>
    </source>
</evidence>
<evidence type="ECO:0000303" key="4">
    <source>
    </source>
</evidence>
<evidence type="ECO:0000305" key="5"/>
<evidence type="ECO:0000305" key="6">
    <source>
    </source>
</evidence>
<gene>
    <name evidence="4" type="primary">pdh</name>
</gene>
<dbReference type="EC" id="1.4.1.20" evidence="3"/>
<dbReference type="EMBL" id="M26661">
    <property type="protein sequence ID" value="AAA22646.1"/>
    <property type="molecule type" value="Genomic_DNA"/>
</dbReference>
<dbReference type="PIR" id="I39939">
    <property type="entry name" value="I39939"/>
</dbReference>
<dbReference type="SMR" id="P23307"/>
<dbReference type="SABIO-RK" id="P23307"/>
<dbReference type="UniPathway" id="UPA00121">
    <property type="reaction ID" value="UER00346"/>
</dbReference>
<dbReference type="GO" id="GO:0050175">
    <property type="term" value="F:phenylalanine dehydrogenase activity"/>
    <property type="evidence" value="ECO:0007669"/>
    <property type="project" value="UniProtKB-EC"/>
</dbReference>
<dbReference type="GO" id="GO:0009094">
    <property type="term" value="P:L-phenylalanine biosynthetic process"/>
    <property type="evidence" value="ECO:0007669"/>
    <property type="project" value="UniProtKB-UniPathway"/>
</dbReference>
<dbReference type="CDD" id="cd01075">
    <property type="entry name" value="NAD_bind_Leu_Phe_Val_DH"/>
    <property type="match status" value="1"/>
</dbReference>
<dbReference type="FunFam" id="3.40.50.10860:FF:000010">
    <property type="entry name" value="Leucine dehydrogenase"/>
    <property type="match status" value="1"/>
</dbReference>
<dbReference type="Gene3D" id="3.40.50.10860">
    <property type="entry name" value="Leucine Dehydrogenase, chain A, domain 1"/>
    <property type="match status" value="1"/>
</dbReference>
<dbReference type="Gene3D" id="3.40.50.720">
    <property type="entry name" value="NAD(P)-binding Rossmann-like Domain"/>
    <property type="match status" value="1"/>
</dbReference>
<dbReference type="InterPro" id="IPR046346">
    <property type="entry name" value="Aminoacid_DH-like_N_sf"/>
</dbReference>
<dbReference type="InterPro" id="IPR006095">
    <property type="entry name" value="Glu/Leu/Phe/Val/Trp_DH"/>
</dbReference>
<dbReference type="InterPro" id="IPR006096">
    <property type="entry name" value="Glu/Leu/Phe/Val/Trp_DH_C"/>
</dbReference>
<dbReference type="InterPro" id="IPR006097">
    <property type="entry name" value="Glu/Leu/Phe/Val/Trp_DH_dimer"/>
</dbReference>
<dbReference type="InterPro" id="IPR033524">
    <property type="entry name" value="Glu/Leu/Phe/Val_DH_AS"/>
</dbReference>
<dbReference type="InterPro" id="IPR016211">
    <property type="entry name" value="Glu/Phe/Leu/Val/Trp_DH_bac/arc"/>
</dbReference>
<dbReference type="InterPro" id="IPR036291">
    <property type="entry name" value="NAD(P)-bd_dom_sf"/>
</dbReference>
<dbReference type="PANTHER" id="PTHR42722">
    <property type="entry name" value="LEUCINE DEHYDROGENASE"/>
    <property type="match status" value="1"/>
</dbReference>
<dbReference type="PANTHER" id="PTHR42722:SF1">
    <property type="entry name" value="VALINE DEHYDROGENASE"/>
    <property type="match status" value="1"/>
</dbReference>
<dbReference type="Pfam" id="PF00208">
    <property type="entry name" value="ELFV_dehydrog"/>
    <property type="match status" value="1"/>
</dbReference>
<dbReference type="Pfam" id="PF02812">
    <property type="entry name" value="ELFV_dehydrog_N"/>
    <property type="match status" value="1"/>
</dbReference>
<dbReference type="PIRSF" id="PIRSF000188">
    <property type="entry name" value="Phe_leu_dh"/>
    <property type="match status" value="1"/>
</dbReference>
<dbReference type="PRINTS" id="PR00082">
    <property type="entry name" value="GLFDHDRGNASE"/>
</dbReference>
<dbReference type="SMART" id="SM00839">
    <property type="entry name" value="ELFV_dehydrog"/>
    <property type="match status" value="1"/>
</dbReference>
<dbReference type="SUPFAM" id="SSF53223">
    <property type="entry name" value="Aminoacid dehydrogenase-like, N-terminal domain"/>
    <property type="match status" value="1"/>
</dbReference>
<dbReference type="SUPFAM" id="SSF51735">
    <property type="entry name" value="NAD(P)-binding Rossmann-fold domains"/>
    <property type="match status" value="1"/>
</dbReference>
<dbReference type="PROSITE" id="PS00074">
    <property type="entry name" value="GLFV_DEHYDROGENASE"/>
    <property type="match status" value="1"/>
</dbReference>
<reference key="1">
    <citation type="journal article" date="1988" name="Gene">
        <title>Cloning and nucleotide sequencing of phenylalanine dehydrogenase gene of Bacillus sphaericus.</title>
        <authorList>
            <person name="Okazaki N."/>
            <person name="Hibino Y."/>
            <person name="Asano Y."/>
            <person name="Ohmori M."/>
            <person name="Numao N."/>
            <person name="Kondo K."/>
        </authorList>
    </citation>
    <scope>NUCLEOTIDE SEQUENCE [GENOMIC DNA]</scope>
    <scope>CATALYTIC ACTIVITY</scope>
    <scope>FUNCTION</scope>
</reference>
<protein>
    <recommendedName>
        <fullName evidence="4">Phenylalanine dehydrogenase</fullName>
        <shortName evidence="4">PheDH</shortName>
        <ecNumber evidence="3">1.4.1.20</ecNumber>
    </recommendedName>
</protein>
<sequence length="381" mass="41578">MAKQLEKSSKIGNEDVFQKIANHEQIVFCNDPVSGLQAIIAIHDTTLGPALGGTRMYPYKNVDEALEDVLRLSEGMTYKCAAADIDFGGGKAVIIGDPEKDKSPALFRAFGQFVESLNGRFYTGTDMGTTMDDFVHAQKETNFINGIPEQYGGSGDSSIPTAQGVIYALKATNQYLFGSDSLSGKTYAIQGLGKVGYKVAEQLLKAGADLFVTDIHENVLNSIKQKSEELGGSVTIVKSDDIYSVQADIFVPCAMGGIINDKTIPKLKVKAVVGSANNQLKDLRHANVLNEKGILYAPDYIVNAGGLIQVADELYGPNKERVLLKTKEIYRSLLEIFNQAALDCITTVEAANRKCQKTIEGQQTRNSFFSRGRRPKWNIKE</sequence>
<accession>P23307</accession>
<proteinExistence type="evidence at protein level"/>
<comment type="function">
    <text evidence="3">Catalyzes the reversible NAD(+)-dependent oxidative deamination of L-phenylalanine to phenylpyruvate.</text>
</comment>
<comment type="catalytic activity">
    <reaction evidence="3">
        <text>L-phenylalanine + NAD(+) + H2O = 3-phenylpyruvate + NH4(+) + NADH + H(+)</text>
        <dbReference type="Rhea" id="RHEA:21408"/>
        <dbReference type="ChEBI" id="CHEBI:15377"/>
        <dbReference type="ChEBI" id="CHEBI:15378"/>
        <dbReference type="ChEBI" id="CHEBI:18005"/>
        <dbReference type="ChEBI" id="CHEBI:28938"/>
        <dbReference type="ChEBI" id="CHEBI:57540"/>
        <dbReference type="ChEBI" id="CHEBI:57945"/>
        <dbReference type="ChEBI" id="CHEBI:58095"/>
        <dbReference type="EC" id="1.4.1.20"/>
    </reaction>
</comment>
<comment type="pathway">
    <text evidence="3">Amino-acid biosynthesis; L-phenylalanine biosynthesis; L-phenylalanine from phenylpyruvate (PDH route): step 1/1.</text>
</comment>
<comment type="similarity">
    <text evidence="5">Belongs to the Glu/Leu/Phe/Val dehydrogenases family.</text>
</comment>